<proteinExistence type="inferred from homology"/>
<reference key="1">
    <citation type="journal article" date="2009" name="J. Bacteriol.">
        <title>Genome sequence of Azotobacter vinelandii, an obligate aerobe specialized to support diverse anaerobic metabolic processes.</title>
        <authorList>
            <person name="Setubal J.C."/>
            <person name="Dos Santos P."/>
            <person name="Goldman B.S."/>
            <person name="Ertesvaag H."/>
            <person name="Espin G."/>
            <person name="Rubio L.M."/>
            <person name="Valla S."/>
            <person name="Almeida N.F."/>
            <person name="Balasubramanian D."/>
            <person name="Cromes L."/>
            <person name="Curatti L."/>
            <person name="Du Z."/>
            <person name="Godsy E."/>
            <person name="Goodner B."/>
            <person name="Hellner-Burris K."/>
            <person name="Hernandez J.A."/>
            <person name="Houmiel K."/>
            <person name="Imperial J."/>
            <person name="Kennedy C."/>
            <person name="Larson T.J."/>
            <person name="Latreille P."/>
            <person name="Ligon L.S."/>
            <person name="Lu J."/>
            <person name="Maerk M."/>
            <person name="Miller N.M."/>
            <person name="Norton S."/>
            <person name="O'Carroll I.P."/>
            <person name="Paulsen I."/>
            <person name="Raulfs E.C."/>
            <person name="Roemer R."/>
            <person name="Rosser J."/>
            <person name="Segura D."/>
            <person name="Slater S."/>
            <person name="Stricklin S.L."/>
            <person name="Studholme D.J."/>
            <person name="Sun J."/>
            <person name="Viana C.J."/>
            <person name="Wallin E."/>
            <person name="Wang B."/>
            <person name="Wheeler C."/>
            <person name="Zhu H."/>
            <person name="Dean D.R."/>
            <person name="Dixon R."/>
            <person name="Wood D."/>
        </authorList>
    </citation>
    <scope>NUCLEOTIDE SEQUENCE [LARGE SCALE GENOMIC DNA]</scope>
    <source>
        <strain>DJ / ATCC BAA-1303</strain>
    </source>
</reference>
<dbReference type="EMBL" id="CP001157">
    <property type="protein sequence ID" value="ACO77693.1"/>
    <property type="molecule type" value="Genomic_DNA"/>
</dbReference>
<dbReference type="RefSeq" id="WP_012700112.1">
    <property type="nucleotide sequence ID" value="NC_012560.1"/>
</dbReference>
<dbReference type="SMR" id="C1DR20"/>
<dbReference type="STRING" id="322710.Avin_14770"/>
<dbReference type="EnsemblBacteria" id="ACO77693">
    <property type="protein sequence ID" value="ACO77693"/>
    <property type="gene ID" value="Avin_14770"/>
</dbReference>
<dbReference type="GeneID" id="88184776"/>
<dbReference type="KEGG" id="avn:Avin_14770"/>
<dbReference type="eggNOG" id="COG2835">
    <property type="taxonomic scope" value="Bacteria"/>
</dbReference>
<dbReference type="HOGENOM" id="CLU_155659_3_1_6"/>
<dbReference type="OrthoDB" id="9812205at2"/>
<dbReference type="Proteomes" id="UP000002424">
    <property type="component" value="Chromosome"/>
</dbReference>
<dbReference type="GO" id="GO:0005829">
    <property type="term" value="C:cytosol"/>
    <property type="evidence" value="ECO:0007669"/>
    <property type="project" value="TreeGrafter"/>
</dbReference>
<dbReference type="FunFam" id="2.20.25.10:FF:000002">
    <property type="entry name" value="UPF0434 protein YcaR"/>
    <property type="match status" value="1"/>
</dbReference>
<dbReference type="Gene3D" id="2.20.25.10">
    <property type="match status" value="1"/>
</dbReference>
<dbReference type="HAMAP" id="MF_01187">
    <property type="entry name" value="UPF0434"/>
    <property type="match status" value="1"/>
</dbReference>
<dbReference type="InterPro" id="IPR005651">
    <property type="entry name" value="Trm112-like"/>
</dbReference>
<dbReference type="PANTHER" id="PTHR33505:SF4">
    <property type="entry name" value="PROTEIN PREY, MITOCHONDRIAL"/>
    <property type="match status" value="1"/>
</dbReference>
<dbReference type="PANTHER" id="PTHR33505">
    <property type="entry name" value="ZGC:162634"/>
    <property type="match status" value="1"/>
</dbReference>
<dbReference type="Pfam" id="PF03966">
    <property type="entry name" value="Trm112p"/>
    <property type="match status" value="1"/>
</dbReference>
<dbReference type="SUPFAM" id="SSF158997">
    <property type="entry name" value="Trm112p-like"/>
    <property type="match status" value="1"/>
</dbReference>
<accession>C1DR20</accession>
<feature type="chain" id="PRO_1000213780" description="UPF0434 protein Avin_14770">
    <location>
        <begin position="1"/>
        <end position="61"/>
    </location>
</feature>
<organism>
    <name type="scientific">Azotobacter vinelandii (strain DJ / ATCC BAA-1303)</name>
    <dbReference type="NCBI Taxonomy" id="322710"/>
    <lineage>
        <taxon>Bacteria</taxon>
        <taxon>Pseudomonadati</taxon>
        <taxon>Pseudomonadota</taxon>
        <taxon>Gammaproteobacteria</taxon>
        <taxon>Pseudomonadales</taxon>
        <taxon>Pseudomonadaceae</taxon>
        <taxon>Azotobacter</taxon>
    </lineage>
</organism>
<comment type="similarity">
    <text evidence="1">Belongs to the UPF0434 family.</text>
</comment>
<protein>
    <recommendedName>
        <fullName evidence="1">UPF0434 protein Avin_14770</fullName>
    </recommendedName>
</protein>
<name>Y1477_AZOVD</name>
<sequence length="61" mass="6739">MDPKLLDILACPICKGPLKLTDDKSELICKADALAFPVRDGIPVMLESEARTLNVDERLDK</sequence>
<evidence type="ECO:0000255" key="1">
    <source>
        <dbReference type="HAMAP-Rule" id="MF_01187"/>
    </source>
</evidence>
<gene>
    <name type="ordered locus">Avin_14770</name>
</gene>